<keyword id="KW-0963">Cytoplasm</keyword>
<keyword id="KW-0378">Hydrolase</keyword>
<keyword id="KW-1185">Reference proteome</keyword>
<keyword id="KW-0694">RNA-binding</keyword>
<keyword id="KW-0820">tRNA-binding</keyword>
<organism>
    <name type="scientific">Nitratiruptor sp. (strain SB155-2)</name>
    <dbReference type="NCBI Taxonomy" id="387092"/>
    <lineage>
        <taxon>Bacteria</taxon>
        <taxon>Pseudomonadati</taxon>
        <taxon>Campylobacterota</taxon>
        <taxon>Epsilonproteobacteria</taxon>
        <taxon>Nautiliales</taxon>
        <taxon>Nitratiruptoraceae</taxon>
        <taxon>Nitratiruptor</taxon>
    </lineage>
</organism>
<sequence>MVALIQRVKESWVKIDGTEIAKIGKGYNILLGVMKEDTTKDIEKLIKKIVKLRLFPNESGKMDKNILEVKGSVLVVSQFTLAGNAKKGNRPDFTAAMPPKEAKELYDHFCQKLSLHLPVQTGLFGAMMEVGIINDGPVTLILDSKKL</sequence>
<feature type="chain" id="PRO_1000050861" description="D-aminoacyl-tRNA deacylase">
    <location>
        <begin position="1"/>
        <end position="147"/>
    </location>
</feature>
<feature type="short sequence motif" description="Gly-cisPro motif, important for rejection of L-amino acids" evidence="1">
    <location>
        <begin position="136"/>
        <end position="137"/>
    </location>
</feature>
<protein>
    <recommendedName>
        <fullName evidence="1">D-aminoacyl-tRNA deacylase</fullName>
        <shortName evidence="1">DTD</shortName>
        <ecNumber evidence="1">3.1.1.96</ecNumber>
    </recommendedName>
    <alternativeName>
        <fullName evidence="1">Gly-tRNA(Ala) deacylase</fullName>
    </alternativeName>
</protein>
<name>DTD_NITSB</name>
<comment type="function">
    <text evidence="1">An aminoacyl-tRNA editing enzyme that deacylates mischarged D-aminoacyl-tRNAs. Also deacylates mischarged glycyl-tRNA(Ala), protecting cells against glycine mischarging by AlaRS. Acts via tRNA-based rather than protein-based catalysis; rejects L-amino acids rather than detecting D-amino acids in the active site. By recycling D-aminoacyl-tRNA to D-amino acids and free tRNA molecules, this enzyme counteracts the toxicity associated with the formation of D-aminoacyl-tRNA entities in vivo and helps enforce protein L-homochirality.</text>
</comment>
<comment type="catalytic activity">
    <reaction evidence="1">
        <text>glycyl-tRNA(Ala) + H2O = tRNA(Ala) + glycine + H(+)</text>
        <dbReference type="Rhea" id="RHEA:53744"/>
        <dbReference type="Rhea" id="RHEA-COMP:9657"/>
        <dbReference type="Rhea" id="RHEA-COMP:13640"/>
        <dbReference type="ChEBI" id="CHEBI:15377"/>
        <dbReference type="ChEBI" id="CHEBI:15378"/>
        <dbReference type="ChEBI" id="CHEBI:57305"/>
        <dbReference type="ChEBI" id="CHEBI:78442"/>
        <dbReference type="ChEBI" id="CHEBI:78522"/>
        <dbReference type="EC" id="3.1.1.96"/>
    </reaction>
</comment>
<comment type="catalytic activity">
    <reaction evidence="1">
        <text>a D-aminoacyl-tRNA + H2O = a tRNA + a D-alpha-amino acid + H(+)</text>
        <dbReference type="Rhea" id="RHEA:13953"/>
        <dbReference type="Rhea" id="RHEA-COMP:10123"/>
        <dbReference type="Rhea" id="RHEA-COMP:10124"/>
        <dbReference type="ChEBI" id="CHEBI:15377"/>
        <dbReference type="ChEBI" id="CHEBI:15378"/>
        <dbReference type="ChEBI" id="CHEBI:59871"/>
        <dbReference type="ChEBI" id="CHEBI:78442"/>
        <dbReference type="ChEBI" id="CHEBI:79333"/>
        <dbReference type="EC" id="3.1.1.96"/>
    </reaction>
</comment>
<comment type="subunit">
    <text evidence="1">Homodimer.</text>
</comment>
<comment type="subcellular location">
    <subcellularLocation>
        <location evidence="1">Cytoplasm</location>
    </subcellularLocation>
</comment>
<comment type="domain">
    <text evidence="1">A Gly-cisPro motif from one monomer fits into the active site of the other monomer to allow specific chiral rejection of L-amino acids.</text>
</comment>
<comment type="similarity">
    <text evidence="1">Belongs to the DTD family.</text>
</comment>
<dbReference type="EC" id="3.1.1.96" evidence="1"/>
<dbReference type="EMBL" id="AP009178">
    <property type="protein sequence ID" value="BAF69187.1"/>
    <property type="molecule type" value="Genomic_DNA"/>
</dbReference>
<dbReference type="RefSeq" id="WP_011979613.1">
    <property type="nucleotide sequence ID" value="NC_009662.1"/>
</dbReference>
<dbReference type="SMR" id="A6Q128"/>
<dbReference type="FunCoup" id="A6Q128">
    <property type="interactions" value="365"/>
</dbReference>
<dbReference type="STRING" id="387092.NIS_0070"/>
<dbReference type="KEGG" id="nis:NIS_0070"/>
<dbReference type="eggNOG" id="COG1490">
    <property type="taxonomic scope" value="Bacteria"/>
</dbReference>
<dbReference type="HOGENOM" id="CLU_076901_1_0_7"/>
<dbReference type="InParanoid" id="A6Q128"/>
<dbReference type="OrthoDB" id="9801395at2"/>
<dbReference type="Proteomes" id="UP000001118">
    <property type="component" value="Chromosome"/>
</dbReference>
<dbReference type="GO" id="GO:0005737">
    <property type="term" value="C:cytoplasm"/>
    <property type="evidence" value="ECO:0007669"/>
    <property type="project" value="UniProtKB-SubCell"/>
</dbReference>
<dbReference type="GO" id="GO:0051500">
    <property type="term" value="F:D-tyrosyl-tRNA(Tyr) deacylase activity"/>
    <property type="evidence" value="ECO:0007669"/>
    <property type="project" value="TreeGrafter"/>
</dbReference>
<dbReference type="GO" id="GO:0106026">
    <property type="term" value="F:Gly-tRNA(Ala) deacylase activity"/>
    <property type="evidence" value="ECO:0007669"/>
    <property type="project" value="UniProtKB-UniRule"/>
</dbReference>
<dbReference type="GO" id="GO:0043908">
    <property type="term" value="F:Ser(Gly)-tRNA(Ala) hydrolase activity"/>
    <property type="evidence" value="ECO:0007669"/>
    <property type="project" value="UniProtKB-UniRule"/>
</dbReference>
<dbReference type="GO" id="GO:0000049">
    <property type="term" value="F:tRNA binding"/>
    <property type="evidence" value="ECO:0007669"/>
    <property type="project" value="UniProtKB-UniRule"/>
</dbReference>
<dbReference type="GO" id="GO:0019478">
    <property type="term" value="P:D-amino acid catabolic process"/>
    <property type="evidence" value="ECO:0007669"/>
    <property type="project" value="UniProtKB-UniRule"/>
</dbReference>
<dbReference type="CDD" id="cd00563">
    <property type="entry name" value="Dtyr_deacylase"/>
    <property type="match status" value="1"/>
</dbReference>
<dbReference type="FunFam" id="3.50.80.10:FF:000001">
    <property type="entry name" value="D-aminoacyl-tRNA deacylase"/>
    <property type="match status" value="1"/>
</dbReference>
<dbReference type="Gene3D" id="3.50.80.10">
    <property type="entry name" value="D-tyrosyl-tRNA(Tyr) deacylase"/>
    <property type="match status" value="1"/>
</dbReference>
<dbReference type="HAMAP" id="MF_00518">
    <property type="entry name" value="Deacylase_Dtd"/>
    <property type="match status" value="1"/>
</dbReference>
<dbReference type="InterPro" id="IPR003732">
    <property type="entry name" value="Daa-tRNA_deacyls_DTD"/>
</dbReference>
<dbReference type="InterPro" id="IPR023509">
    <property type="entry name" value="DTD-like_sf"/>
</dbReference>
<dbReference type="NCBIfam" id="TIGR00256">
    <property type="entry name" value="D-aminoacyl-tRNA deacylase"/>
    <property type="match status" value="1"/>
</dbReference>
<dbReference type="PANTHER" id="PTHR10472:SF5">
    <property type="entry name" value="D-AMINOACYL-TRNA DEACYLASE 1"/>
    <property type="match status" value="1"/>
</dbReference>
<dbReference type="PANTHER" id="PTHR10472">
    <property type="entry name" value="D-TYROSYL-TRNA TYR DEACYLASE"/>
    <property type="match status" value="1"/>
</dbReference>
<dbReference type="Pfam" id="PF02580">
    <property type="entry name" value="Tyr_Deacylase"/>
    <property type="match status" value="1"/>
</dbReference>
<dbReference type="SUPFAM" id="SSF69500">
    <property type="entry name" value="DTD-like"/>
    <property type="match status" value="1"/>
</dbReference>
<gene>
    <name evidence="1" type="primary">dtd</name>
    <name type="ordered locus">NIS_0070</name>
</gene>
<reference key="1">
    <citation type="journal article" date="2007" name="Proc. Natl. Acad. Sci. U.S.A.">
        <title>Deep-sea vent epsilon-proteobacterial genomes provide insights into emergence of pathogens.</title>
        <authorList>
            <person name="Nakagawa S."/>
            <person name="Takaki Y."/>
            <person name="Shimamura S."/>
            <person name="Reysenbach A.-L."/>
            <person name="Takai K."/>
            <person name="Horikoshi K."/>
        </authorList>
    </citation>
    <scope>NUCLEOTIDE SEQUENCE [LARGE SCALE GENOMIC DNA]</scope>
    <source>
        <strain>SB155-2</strain>
    </source>
</reference>
<evidence type="ECO:0000255" key="1">
    <source>
        <dbReference type="HAMAP-Rule" id="MF_00518"/>
    </source>
</evidence>
<accession>A6Q128</accession>
<proteinExistence type="inferred from homology"/>